<dbReference type="EC" id="1.4.99.-" evidence="1"/>
<dbReference type="EMBL" id="AE005674">
    <property type="protein sequence ID" value="AAN42793.2"/>
    <property type="molecule type" value="Genomic_DNA"/>
</dbReference>
<dbReference type="EMBL" id="AE014073">
    <property type="protein sequence ID" value="AAP16684.1"/>
    <property type="molecule type" value="Genomic_DNA"/>
</dbReference>
<dbReference type="RefSeq" id="NP_707086.2">
    <property type="nucleotide sequence ID" value="NC_004337.2"/>
</dbReference>
<dbReference type="RefSeq" id="WP_001266897.1">
    <property type="nucleotide sequence ID" value="NZ_WPGW01000047.1"/>
</dbReference>
<dbReference type="SMR" id="Q7UCT6"/>
<dbReference type="STRING" id="198214.SF1178"/>
<dbReference type="PaxDb" id="198214-SF1178"/>
<dbReference type="GeneID" id="1024136"/>
<dbReference type="KEGG" id="sfl:SF1178"/>
<dbReference type="KEGG" id="sfx:S1266"/>
<dbReference type="PATRIC" id="fig|198214.7.peg.1392"/>
<dbReference type="HOGENOM" id="CLU_007884_9_2_6"/>
<dbReference type="UniPathway" id="UPA00043">
    <property type="reaction ID" value="UER00498"/>
</dbReference>
<dbReference type="Proteomes" id="UP000001006">
    <property type="component" value="Chromosome"/>
</dbReference>
<dbReference type="Proteomes" id="UP000002673">
    <property type="component" value="Chromosome"/>
</dbReference>
<dbReference type="GO" id="GO:0005737">
    <property type="term" value="C:cytoplasm"/>
    <property type="evidence" value="ECO:0007669"/>
    <property type="project" value="TreeGrafter"/>
</dbReference>
<dbReference type="GO" id="GO:0005886">
    <property type="term" value="C:plasma membrane"/>
    <property type="evidence" value="ECO:0007669"/>
    <property type="project" value="TreeGrafter"/>
</dbReference>
<dbReference type="GO" id="GO:0008718">
    <property type="term" value="F:D-amino-acid dehydrogenase activity"/>
    <property type="evidence" value="ECO:0007669"/>
    <property type="project" value="UniProtKB-UniRule"/>
</dbReference>
<dbReference type="GO" id="GO:0055130">
    <property type="term" value="P:D-alanine catabolic process"/>
    <property type="evidence" value="ECO:0007669"/>
    <property type="project" value="UniProtKB-UniPathway"/>
</dbReference>
<dbReference type="FunFam" id="3.50.50.60:FF:000020">
    <property type="entry name" value="D-amino acid dehydrogenase"/>
    <property type="match status" value="1"/>
</dbReference>
<dbReference type="Gene3D" id="3.30.9.10">
    <property type="entry name" value="D-Amino Acid Oxidase, subunit A, domain 2"/>
    <property type="match status" value="1"/>
</dbReference>
<dbReference type="Gene3D" id="3.50.50.60">
    <property type="entry name" value="FAD/NAD(P)-binding domain"/>
    <property type="match status" value="2"/>
</dbReference>
<dbReference type="HAMAP" id="MF_01202">
    <property type="entry name" value="DadA"/>
    <property type="match status" value="1"/>
</dbReference>
<dbReference type="InterPro" id="IPR023080">
    <property type="entry name" value="DadA"/>
</dbReference>
<dbReference type="InterPro" id="IPR006076">
    <property type="entry name" value="FAD-dep_OxRdtase"/>
</dbReference>
<dbReference type="InterPro" id="IPR036188">
    <property type="entry name" value="FAD/NAD-bd_sf"/>
</dbReference>
<dbReference type="NCBIfam" id="NF001933">
    <property type="entry name" value="PRK00711.1"/>
    <property type="match status" value="1"/>
</dbReference>
<dbReference type="PANTHER" id="PTHR13847:SF280">
    <property type="entry name" value="D-AMINO ACID DEHYDROGENASE"/>
    <property type="match status" value="1"/>
</dbReference>
<dbReference type="PANTHER" id="PTHR13847">
    <property type="entry name" value="SARCOSINE DEHYDROGENASE-RELATED"/>
    <property type="match status" value="1"/>
</dbReference>
<dbReference type="Pfam" id="PF01266">
    <property type="entry name" value="DAO"/>
    <property type="match status" value="1"/>
</dbReference>
<dbReference type="SUPFAM" id="SSF54373">
    <property type="entry name" value="FAD-linked reductases, C-terminal domain"/>
    <property type="match status" value="1"/>
</dbReference>
<dbReference type="SUPFAM" id="SSF51905">
    <property type="entry name" value="FAD/NAD(P)-binding domain"/>
    <property type="match status" value="1"/>
</dbReference>
<feature type="chain" id="PRO_0000166151" description="D-amino acid dehydrogenase">
    <location>
        <begin position="1"/>
        <end position="432"/>
    </location>
</feature>
<feature type="binding site" evidence="1">
    <location>
        <begin position="3"/>
        <end position="17"/>
    </location>
    <ligand>
        <name>FAD</name>
        <dbReference type="ChEBI" id="CHEBI:57692"/>
    </ligand>
</feature>
<proteinExistence type="inferred from homology"/>
<sequence length="432" mass="47568">MRVVILGSGVVGVASAWYLNQAGHEVTVIDREPGAALETSAANAGQISPGYAAPWAAPGVPLKAIKWMFQRHAPLAVRLDGTQFQLKWMWQMLRNCDTSHYMENKGRMVRLAEYSRDCLKALRAETNIQYEGRQGGTLQLFRTEQQYENATRDIAVLEDAGVPYQLLESSRLAEVDPALAEVAHKLTGGLQLPNDETGDCQLFTQNLARMAEQAGVKFRFNTPVDQLLCDGEQIYGVKFGDEVIKADAYVMAFGSYSTAMLKGIVDIPVYPLKGYSLTIPIAQEDGAPVSTILDETYKIAITRFDNRIRVGGMAEIVGFNTELLQPRRETLEMVVRDLYPRGGHVEQATFWTGLRPMTPDGTPVVGSTRFKNLWLNTGHGTLGWTMACGSGQLLSDLLSGRTPAIPYEDLSVARYSRGFTPSRPGHLHGAHS</sequence>
<organism>
    <name type="scientific">Shigella flexneri</name>
    <dbReference type="NCBI Taxonomy" id="623"/>
    <lineage>
        <taxon>Bacteria</taxon>
        <taxon>Pseudomonadati</taxon>
        <taxon>Pseudomonadota</taxon>
        <taxon>Gammaproteobacteria</taxon>
        <taxon>Enterobacterales</taxon>
        <taxon>Enterobacteriaceae</taxon>
        <taxon>Shigella</taxon>
    </lineage>
</organism>
<evidence type="ECO:0000255" key="1">
    <source>
        <dbReference type="HAMAP-Rule" id="MF_01202"/>
    </source>
</evidence>
<reference key="1">
    <citation type="journal article" date="2002" name="Nucleic Acids Res.">
        <title>Genome sequence of Shigella flexneri 2a: insights into pathogenicity through comparison with genomes of Escherichia coli K12 and O157.</title>
        <authorList>
            <person name="Jin Q."/>
            <person name="Yuan Z."/>
            <person name="Xu J."/>
            <person name="Wang Y."/>
            <person name="Shen Y."/>
            <person name="Lu W."/>
            <person name="Wang J."/>
            <person name="Liu H."/>
            <person name="Yang J."/>
            <person name="Yang F."/>
            <person name="Zhang X."/>
            <person name="Zhang J."/>
            <person name="Yang G."/>
            <person name="Wu H."/>
            <person name="Qu D."/>
            <person name="Dong J."/>
            <person name="Sun L."/>
            <person name="Xue Y."/>
            <person name="Zhao A."/>
            <person name="Gao Y."/>
            <person name="Zhu J."/>
            <person name="Kan B."/>
            <person name="Ding K."/>
            <person name="Chen S."/>
            <person name="Cheng H."/>
            <person name="Yao Z."/>
            <person name="He B."/>
            <person name="Chen R."/>
            <person name="Ma D."/>
            <person name="Qiang B."/>
            <person name="Wen Y."/>
            <person name="Hou Y."/>
            <person name="Yu J."/>
        </authorList>
    </citation>
    <scope>NUCLEOTIDE SEQUENCE [LARGE SCALE GENOMIC DNA]</scope>
    <source>
        <strain>301 / Serotype 2a</strain>
    </source>
</reference>
<reference key="2">
    <citation type="journal article" date="2003" name="Infect. Immun.">
        <title>Complete genome sequence and comparative genomics of Shigella flexneri serotype 2a strain 2457T.</title>
        <authorList>
            <person name="Wei J."/>
            <person name="Goldberg M.B."/>
            <person name="Burland V."/>
            <person name="Venkatesan M.M."/>
            <person name="Deng W."/>
            <person name="Fournier G."/>
            <person name="Mayhew G.F."/>
            <person name="Plunkett G. III"/>
            <person name="Rose D.J."/>
            <person name="Darling A."/>
            <person name="Mau B."/>
            <person name="Perna N.T."/>
            <person name="Payne S.M."/>
            <person name="Runyen-Janecky L.J."/>
            <person name="Zhou S."/>
            <person name="Schwartz D.C."/>
            <person name="Blattner F.R."/>
        </authorList>
    </citation>
    <scope>NUCLEOTIDE SEQUENCE [LARGE SCALE GENOMIC DNA]</scope>
    <source>
        <strain>ATCC 700930 / 2457T / Serotype 2a</strain>
    </source>
</reference>
<name>DADA_SHIFL</name>
<keyword id="KW-0274">FAD</keyword>
<keyword id="KW-0285">Flavoprotein</keyword>
<keyword id="KW-0560">Oxidoreductase</keyword>
<keyword id="KW-1185">Reference proteome</keyword>
<comment type="function">
    <text evidence="1">Oxidative deamination of D-amino acids.</text>
</comment>
<comment type="catalytic activity">
    <reaction evidence="1">
        <text>a D-alpha-amino acid + A + H2O = a 2-oxocarboxylate + AH2 + NH4(+)</text>
        <dbReference type="Rhea" id="RHEA:18125"/>
        <dbReference type="ChEBI" id="CHEBI:13193"/>
        <dbReference type="ChEBI" id="CHEBI:15377"/>
        <dbReference type="ChEBI" id="CHEBI:17499"/>
        <dbReference type="ChEBI" id="CHEBI:28938"/>
        <dbReference type="ChEBI" id="CHEBI:35179"/>
        <dbReference type="ChEBI" id="CHEBI:59871"/>
    </reaction>
</comment>
<comment type="cofactor">
    <cofactor evidence="1">
        <name>FAD</name>
        <dbReference type="ChEBI" id="CHEBI:57692"/>
    </cofactor>
</comment>
<comment type="pathway">
    <text>Amino-acid degradation; D-alanine degradation; NH(3) and pyruvate from D-alanine: step 1/1.</text>
</comment>
<comment type="similarity">
    <text evidence="1">Belongs to the DadA oxidoreductase family.</text>
</comment>
<gene>
    <name evidence="1" type="primary">dadA</name>
    <name type="ordered locus">SF1178</name>
    <name type="ordered locus">S1266</name>
</gene>
<accession>Q7UCT6</accession>
<accession>Q83RQ3</accession>
<protein>
    <recommendedName>
        <fullName evidence="1">D-amino acid dehydrogenase</fullName>
        <ecNumber evidence="1">1.4.99.-</ecNumber>
    </recommendedName>
</protein>